<reference key="1">
    <citation type="journal article" date="2003" name="Proc. Natl. Acad. Sci. U.S.A.">
        <title>The complete genome sequence of the carcinogenic bacterium Helicobacter hepaticus.</title>
        <authorList>
            <person name="Suerbaum S."/>
            <person name="Josenhans C."/>
            <person name="Sterzenbach T."/>
            <person name="Drescher B."/>
            <person name="Brandt P."/>
            <person name="Bell M."/>
            <person name="Droege M."/>
            <person name="Fartmann B."/>
            <person name="Fischer H.-P."/>
            <person name="Ge Z."/>
            <person name="Hoerster A."/>
            <person name="Holland R."/>
            <person name="Klein K."/>
            <person name="Koenig J."/>
            <person name="Macko L."/>
            <person name="Mendz G.L."/>
            <person name="Nyakatura G."/>
            <person name="Schauer D.B."/>
            <person name="Shen Z."/>
            <person name="Weber J."/>
            <person name="Frosch M."/>
            <person name="Fox J.G."/>
        </authorList>
    </citation>
    <scope>NUCLEOTIDE SEQUENCE [LARGE SCALE GENOMIC DNA]</scope>
    <source>
        <strain>ATCC 51449 / 3B1</strain>
    </source>
</reference>
<keyword id="KW-0012">Acyltransferase</keyword>
<keyword id="KW-0133">Cell shape</keyword>
<keyword id="KW-0961">Cell wall biogenesis/degradation</keyword>
<keyword id="KW-0963">Cytoplasm</keyword>
<keyword id="KW-0460">Magnesium</keyword>
<keyword id="KW-0479">Metal-binding</keyword>
<keyword id="KW-0511">Multifunctional enzyme</keyword>
<keyword id="KW-0548">Nucleotidyltransferase</keyword>
<keyword id="KW-0573">Peptidoglycan synthesis</keyword>
<keyword id="KW-1185">Reference proteome</keyword>
<keyword id="KW-0677">Repeat</keyword>
<keyword id="KW-0808">Transferase</keyword>
<protein>
    <recommendedName>
        <fullName evidence="1">Bifunctional protein GlmU</fullName>
    </recommendedName>
    <domain>
        <recommendedName>
            <fullName evidence="1">UDP-N-acetylglucosamine pyrophosphorylase</fullName>
            <ecNumber evidence="1">2.7.7.23</ecNumber>
        </recommendedName>
        <alternativeName>
            <fullName evidence="1">N-acetylglucosamine-1-phosphate uridyltransferase</fullName>
        </alternativeName>
    </domain>
    <domain>
        <recommendedName>
            <fullName evidence="1">Glucosamine-1-phosphate N-acetyltransferase</fullName>
            <ecNumber evidence="1">2.3.1.157</ecNumber>
        </recommendedName>
    </domain>
</protein>
<sequence length="454" mass="50108">MNVSVVILAAGAGTRMKSHIPKVLHKICGKEMLFYSIDEALKISDDVHIVLFHQENVIKERLLCAYKQAYADGALHFHLQDHAHYPGTGGALMQGQNAGANAKKPFCYQYDEILILNGDMPLVCSQTLKSLCQNKAQIVMSVLHLQNPDGYGRVVMESGVVQRIIEQKDAKESELLIKDVNAGVYKIHKSILDLYLPQVGNANNQQEFYLTDVVFYAKENGIEIAALEVKEEEFMGVNSKIQLACAQEIMLQRLREKAMEQGVIMNLPHTIYLESNVTFSGECIIEQGVQILGDSHISDSHIKAHSVIEQSIIESSDVGPLAHIRPKSHIKNTHIGNFVETKSSTLRGVKVGHLSYLGDCEIDEGSNIGAGVITCNYDGKAKHKTTIGKSVFVGSDVQLIAPLNIESNVLIGAGSTITKDIEYGDLALSRVAQQNIKDGFFKFFSDKNEEKKEQ</sequence>
<evidence type="ECO:0000255" key="1">
    <source>
        <dbReference type="HAMAP-Rule" id="MF_01631"/>
    </source>
</evidence>
<name>GLMU_HELHP</name>
<comment type="function">
    <text evidence="1">Catalyzes the last two sequential reactions in the de novo biosynthetic pathway for UDP-N-acetylglucosamine (UDP-GlcNAc). The C-terminal domain catalyzes the transfer of acetyl group from acetyl coenzyme A to glucosamine-1-phosphate (GlcN-1-P) to produce N-acetylglucosamine-1-phosphate (GlcNAc-1-P), which is converted into UDP-GlcNAc by the transfer of uridine 5-monophosphate (from uridine 5-triphosphate), a reaction catalyzed by the N-terminal domain.</text>
</comment>
<comment type="catalytic activity">
    <reaction evidence="1">
        <text>alpha-D-glucosamine 1-phosphate + acetyl-CoA = N-acetyl-alpha-D-glucosamine 1-phosphate + CoA + H(+)</text>
        <dbReference type="Rhea" id="RHEA:13725"/>
        <dbReference type="ChEBI" id="CHEBI:15378"/>
        <dbReference type="ChEBI" id="CHEBI:57287"/>
        <dbReference type="ChEBI" id="CHEBI:57288"/>
        <dbReference type="ChEBI" id="CHEBI:57776"/>
        <dbReference type="ChEBI" id="CHEBI:58516"/>
        <dbReference type="EC" id="2.3.1.157"/>
    </reaction>
</comment>
<comment type="catalytic activity">
    <reaction evidence="1">
        <text>N-acetyl-alpha-D-glucosamine 1-phosphate + UTP + H(+) = UDP-N-acetyl-alpha-D-glucosamine + diphosphate</text>
        <dbReference type="Rhea" id="RHEA:13509"/>
        <dbReference type="ChEBI" id="CHEBI:15378"/>
        <dbReference type="ChEBI" id="CHEBI:33019"/>
        <dbReference type="ChEBI" id="CHEBI:46398"/>
        <dbReference type="ChEBI" id="CHEBI:57705"/>
        <dbReference type="ChEBI" id="CHEBI:57776"/>
        <dbReference type="EC" id="2.7.7.23"/>
    </reaction>
</comment>
<comment type="cofactor">
    <cofactor evidence="1">
        <name>Mg(2+)</name>
        <dbReference type="ChEBI" id="CHEBI:18420"/>
    </cofactor>
    <text evidence="1">Binds 1 Mg(2+) ion per subunit.</text>
</comment>
<comment type="pathway">
    <text evidence="1">Nucleotide-sugar biosynthesis; UDP-N-acetyl-alpha-D-glucosamine biosynthesis; N-acetyl-alpha-D-glucosamine 1-phosphate from alpha-D-glucosamine 6-phosphate (route II): step 2/2.</text>
</comment>
<comment type="pathway">
    <text evidence="1">Nucleotide-sugar biosynthesis; UDP-N-acetyl-alpha-D-glucosamine biosynthesis; UDP-N-acetyl-alpha-D-glucosamine from N-acetyl-alpha-D-glucosamine 1-phosphate: step 1/1.</text>
</comment>
<comment type="pathway">
    <text evidence="1">Bacterial outer membrane biogenesis; LPS lipid A biosynthesis.</text>
</comment>
<comment type="subunit">
    <text evidence="1">Homotrimer.</text>
</comment>
<comment type="subcellular location">
    <subcellularLocation>
        <location evidence="1">Cytoplasm</location>
    </subcellularLocation>
</comment>
<comment type="similarity">
    <text evidence="1">In the N-terminal section; belongs to the N-acetylglucosamine-1-phosphate uridyltransferase family.</text>
</comment>
<comment type="similarity">
    <text evidence="1">In the C-terminal section; belongs to the transferase hexapeptide repeat family.</text>
</comment>
<feature type="chain" id="PRO_0000233781" description="Bifunctional protein GlmU">
    <location>
        <begin position="1"/>
        <end position="454"/>
    </location>
</feature>
<feature type="region of interest" description="Pyrophosphorylase" evidence="1">
    <location>
        <begin position="1"/>
        <end position="240"/>
    </location>
</feature>
<feature type="region of interest" description="Linker" evidence="1">
    <location>
        <begin position="241"/>
        <end position="261"/>
    </location>
</feature>
<feature type="region of interest" description="N-acetyltransferase" evidence="1">
    <location>
        <begin position="262"/>
        <end position="454"/>
    </location>
</feature>
<feature type="active site" description="Proton acceptor" evidence="1">
    <location>
        <position position="353"/>
    </location>
</feature>
<feature type="binding site" evidence="1">
    <location>
        <begin position="8"/>
        <end position="11"/>
    </location>
    <ligand>
        <name>UDP-N-acetyl-alpha-D-glucosamine</name>
        <dbReference type="ChEBI" id="CHEBI:57705"/>
    </ligand>
</feature>
<feature type="binding site" evidence="1">
    <location>
        <position position="22"/>
    </location>
    <ligand>
        <name>UDP-N-acetyl-alpha-D-glucosamine</name>
        <dbReference type="ChEBI" id="CHEBI:57705"/>
    </ligand>
</feature>
<feature type="binding site" evidence="1">
    <location>
        <begin position="87"/>
        <end position="88"/>
    </location>
    <ligand>
        <name>UDP-N-acetyl-alpha-D-glucosamine</name>
        <dbReference type="ChEBI" id="CHEBI:57705"/>
    </ligand>
</feature>
<feature type="binding site" evidence="1">
    <location>
        <position position="119"/>
    </location>
    <ligand>
        <name>Mg(2+)</name>
        <dbReference type="ChEBI" id="CHEBI:18420"/>
    </ligand>
</feature>
<feature type="binding site" evidence="1">
    <location>
        <position position="152"/>
    </location>
    <ligand>
        <name>UDP-N-acetyl-alpha-D-glucosamine</name>
        <dbReference type="ChEBI" id="CHEBI:57705"/>
    </ligand>
</feature>
<feature type="binding site" evidence="1">
    <location>
        <position position="166"/>
    </location>
    <ligand>
        <name>UDP-N-acetyl-alpha-D-glucosamine</name>
        <dbReference type="ChEBI" id="CHEBI:57705"/>
    </ligand>
</feature>
<feature type="binding site" evidence="1">
    <location>
        <position position="181"/>
    </location>
    <ligand>
        <name>UDP-N-acetyl-alpha-D-glucosamine</name>
        <dbReference type="ChEBI" id="CHEBI:57705"/>
    </ligand>
</feature>
<feature type="binding site" evidence="1">
    <location>
        <position position="238"/>
    </location>
    <ligand>
        <name>Mg(2+)</name>
        <dbReference type="ChEBI" id="CHEBI:18420"/>
    </ligand>
</feature>
<feature type="binding site" evidence="1">
    <location>
        <position position="238"/>
    </location>
    <ligand>
        <name>UDP-N-acetyl-alpha-D-glucosamine</name>
        <dbReference type="ChEBI" id="CHEBI:57705"/>
    </ligand>
</feature>
<feature type="binding site" evidence="1">
    <location>
        <position position="325"/>
    </location>
    <ligand>
        <name>UDP-N-acetyl-alpha-D-glucosamine</name>
        <dbReference type="ChEBI" id="CHEBI:57705"/>
    </ligand>
</feature>
<feature type="binding site" evidence="1">
    <location>
        <position position="342"/>
    </location>
    <ligand>
        <name>UDP-N-acetyl-alpha-D-glucosamine</name>
        <dbReference type="ChEBI" id="CHEBI:57705"/>
    </ligand>
</feature>
<feature type="binding site" evidence="1">
    <location>
        <position position="356"/>
    </location>
    <ligand>
        <name>UDP-N-acetyl-alpha-D-glucosamine</name>
        <dbReference type="ChEBI" id="CHEBI:57705"/>
    </ligand>
</feature>
<feature type="binding site" evidence="1">
    <location>
        <position position="367"/>
    </location>
    <ligand>
        <name>UDP-N-acetyl-alpha-D-glucosamine</name>
        <dbReference type="ChEBI" id="CHEBI:57705"/>
    </ligand>
</feature>
<feature type="binding site" evidence="1">
    <location>
        <position position="370"/>
    </location>
    <ligand>
        <name>acetyl-CoA</name>
        <dbReference type="ChEBI" id="CHEBI:57288"/>
    </ligand>
</feature>
<feature type="binding site" evidence="1">
    <location>
        <begin position="376"/>
        <end position="377"/>
    </location>
    <ligand>
        <name>acetyl-CoA</name>
        <dbReference type="ChEBI" id="CHEBI:57288"/>
    </ligand>
</feature>
<feature type="binding site" evidence="1">
    <location>
        <position position="395"/>
    </location>
    <ligand>
        <name>acetyl-CoA</name>
        <dbReference type="ChEBI" id="CHEBI:57288"/>
    </ligand>
</feature>
<feature type="binding site" evidence="1">
    <location>
        <position position="413"/>
    </location>
    <ligand>
        <name>acetyl-CoA</name>
        <dbReference type="ChEBI" id="CHEBI:57288"/>
    </ligand>
</feature>
<feature type="binding site" evidence="1">
    <location>
        <position position="430"/>
    </location>
    <ligand>
        <name>acetyl-CoA</name>
        <dbReference type="ChEBI" id="CHEBI:57288"/>
    </ligand>
</feature>
<organism>
    <name type="scientific">Helicobacter hepaticus (strain ATCC 51449 / 3B1)</name>
    <dbReference type="NCBI Taxonomy" id="235279"/>
    <lineage>
        <taxon>Bacteria</taxon>
        <taxon>Pseudomonadati</taxon>
        <taxon>Campylobacterota</taxon>
        <taxon>Epsilonproteobacteria</taxon>
        <taxon>Campylobacterales</taxon>
        <taxon>Helicobacteraceae</taxon>
        <taxon>Helicobacter</taxon>
    </lineage>
</organism>
<proteinExistence type="inferred from homology"/>
<accession>Q7VIB6</accession>
<gene>
    <name evidence="1" type="primary">glmU</name>
    <name type="ordered locus">HH_0691</name>
</gene>
<dbReference type="EC" id="2.7.7.23" evidence="1"/>
<dbReference type="EC" id="2.3.1.157" evidence="1"/>
<dbReference type="EMBL" id="AE017125">
    <property type="protein sequence ID" value="AAP77288.1"/>
    <property type="molecule type" value="Genomic_DNA"/>
</dbReference>
<dbReference type="RefSeq" id="WP_011115533.1">
    <property type="nucleotide sequence ID" value="NC_004917.1"/>
</dbReference>
<dbReference type="SMR" id="Q7VIB6"/>
<dbReference type="STRING" id="235279.HH_0691"/>
<dbReference type="KEGG" id="hhe:HH_0691"/>
<dbReference type="eggNOG" id="COG1207">
    <property type="taxonomic scope" value="Bacteria"/>
</dbReference>
<dbReference type="HOGENOM" id="CLU_029499_15_2_7"/>
<dbReference type="OrthoDB" id="9775031at2"/>
<dbReference type="UniPathway" id="UPA00113">
    <property type="reaction ID" value="UER00532"/>
</dbReference>
<dbReference type="UniPathway" id="UPA00113">
    <property type="reaction ID" value="UER00533"/>
</dbReference>
<dbReference type="UniPathway" id="UPA00973"/>
<dbReference type="Proteomes" id="UP000002495">
    <property type="component" value="Chromosome"/>
</dbReference>
<dbReference type="GO" id="GO:0005737">
    <property type="term" value="C:cytoplasm"/>
    <property type="evidence" value="ECO:0007669"/>
    <property type="project" value="UniProtKB-SubCell"/>
</dbReference>
<dbReference type="GO" id="GO:0016020">
    <property type="term" value="C:membrane"/>
    <property type="evidence" value="ECO:0007669"/>
    <property type="project" value="GOC"/>
</dbReference>
<dbReference type="GO" id="GO:0019134">
    <property type="term" value="F:glucosamine-1-phosphate N-acetyltransferase activity"/>
    <property type="evidence" value="ECO:0007669"/>
    <property type="project" value="UniProtKB-UniRule"/>
</dbReference>
<dbReference type="GO" id="GO:0000287">
    <property type="term" value="F:magnesium ion binding"/>
    <property type="evidence" value="ECO:0007669"/>
    <property type="project" value="UniProtKB-UniRule"/>
</dbReference>
<dbReference type="GO" id="GO:0003977">
    <property type="term" value="F:UDP-N-acetylglucosamine diphosphorylase activity"/>
    <property type="evidence" value="ECO:0007669"/>
    <property type="project" value="UniProtKB-UniRule"/>
</dbReference>
<dbReference type="GO" id="GO:0000902">
    <property type="term" value="P:cell morphogenesis"/>
    <property type="evidence" value="ECO:0007669"/>
    <property type="project" value="UniProtKB-UniRule"/>
</dbReference>
<dbReference type="GO" id="GO:0071555">
    <property type="term" value="P:cell wall organization"/>
    <property type="evidence" value="ECO:0007669"/>
    <property type="project" value="UniProtKB-KW"/>
</dbReference>
<dbReference type="GO" id="GO:0009245">
    <property type="term" value="P:lipid A biosynthetic process"/>
    <property type="evidence" value="ECO:0007669"/>
    <property type="project" value="UniProtKB-UniRule"/>
</dbReference>
<dbReference type="GO" id="GO:0009252">
    <property type="term" value="P:peptidoglycan biosynthetic process"/>
    <property type="evidence" value="ECO:0007669"/>
    <property type="project" value="UniProtKB-UniRule"/>
</dbReference>
<dbReference type="GO" id="GO:0008360">
    <property type="term" value="P:regulation of cell shape"/>
    <property type="evidence" value="ECO:0007669"/>
    <property type="project" value="UniProtKB-KW"/>
</dbReference>
<dbReference type="GO" id="GO:0006048">
    <property type="term" value="P:UDP-N-acetylglucosamine biosynthetic process"/>
    <property type="evidence" value="ECO:0007669"/>
    <property type="project" value="UniProtKB-UniPathway"/>
</dbReference>
<dbReference type="CDD" id="cd02540">
    <property type="entry name" value="GT2_GlmU_N_bac"/>
    <property type="match status" value="1"/>
</dbReference>
<dbReference type="CDD" id="cd03353">
    <property type="entry name" value="LbH_GlmU_C"/>
    <property type="match status" value="1"/>
</dbReference>
<dbReference type="Gene3D" id="2.160.10.10">
    <property type="entry name" value="Hexapeptide repeat proteins"/>
    <property type="match status" value="1"/>
</dbReference>
<dbReference type="Gene3D" id="3.90.550.10">
    <property type="entry name" value="Spore Coat Polysaccharide Biosynthesis Protein SpsA, Chain A"/>
    <property type="match status" value="1"/>
</dbReference>
<dbReference type="HAMAP" id="MF_01631">
    <property type="entry name" value="GlmU"/>
    <property type="match status" value="1"/>
</dbReference>
<dbReference type="InterPro" id="IPR005882">
    <property type="entry name" value="Bifunctional_GlmU"/>
</dbReference>
<dbReference type="InterPro" id="IPR050065">
    <property type="entry name" value="GlmU-like"/>
</dbReference>
<dbReference type="InterPro" id="IPR038009">
    <property type="entry name" value="GlmU_C_LbH"/>
</dbReference>
<dbReference type="InterPro" id="IPR018357">
    <property type="entry name" value="Hexapep_transf_CS"/>
</dbReference>
<dbReference type="InterPro" id="IPR025877">
    <property type="entry name" value="MobA-like_NTP_Trfase"/>
</dbReference>
<dbReference type="InterPro" id="IPR029044">
    <property type="entry name" value="Nucleotide-diphossugar_trans"/>
</dbReference>
<dbReference type="InterPro" id="IPR011004">
    <property type="entry name" value="Trimer_LpxA-like_sf"/>
</dbReference>
<dbReference type="NCBIfam" id="TIGR01173">
    <property type="entry name" value="glmU"/>
    <property type="match status" value="1"/>
</dbReference>
<dbReference type="NCBIfam" id="NF010939">
    <property type="entry name" value="PRK14359.1"/>
    <property type="match status" value="1"/>
</dbReference>
<dbReference type="PANTHER" id="PTHR43584:SF3">
    <property type="entry name" value="BIFUNCTIONAL PROTEIN GLMU"/>
    <property type="match status" value="1"/>
</dbReference>
<dbReference type="PANTHER" id="PTHR43584">
    <property type="entry name" value="NUCLEOTIDYL TRANSFERASE"/>
    <property type="match status" value="1"/>
</dbReference>
<dbReference type="Pfam" id="PF12804">
    <property type="entry name" value="NTP_transf_3"/>
    <property type="match status" value="1"/>
</dbReference>
<dbReference type="SUPFAM" id="SSF53448">
    <property type="entry name" value="Nucleotide-diphospho-sugar transferases"/>
    <property type="match status" value="1"/>
</dbReference>
<dbReference type="SUPFAM" id="SSF51161">
    <property type="entry name" value="Trimeric LpxA-like enzymes"/>
    <property type="match status" value="1"/>
</dbReference>
<dbReference type="PROSITE" id="PS00101">
    <property type="entry name" value="HEXAPEP_TRANSFERASES"/>
    <property type="match status" value="1"/>
</dbReference>